<feature type="chain" id="PRO_0000348875" description="tRNA-cytidine(32) 2-sulfurtransferase">
    <location>
        <begin position="1"/>
        <end position="305"/>
    </location>
</feature>
<feature type="region of interest" description="Disordered" evidence="2">
    <location>
        <begin position="1"/>
        <end position="20"/>
    </location>
</feature>
<feature type="region of interest" description="Disordered" evidence="2">
    <location>
        <begin position="282"/>
        <end position="305"/>
    </location>
</feature>
<feature type="short sequence motif" description="PP-loop motif" evidence="1">
    <location>
        <begin position="59"/>
        <end position="64"/>
    </location>
</feature>
<feature type="compositionally biased region" description="Low complexity" evidence="2">
    <location>
        <begin position="282"/>
        <end position="293"/>
    </location>
</feature>
<feature type="binding site" evidence="1">
    <location>
        <position position="134"/>
    </location>
    <ligand>
        <name>[4Fe-4S] cluster</name>
        <dbReference type="ChEBI" id="CHEBI:49883"/>
    </ligand>
</feature>
<feature type="binding site" evidence="1">
    <location>
        <position position="137"/>
    </location>
    <ligand>
        <name>[4Fe-4S] cluster</name>
        <dbReference type="ChEBI" id="CHEBI:49883"/>
    </ligand>
</feature>
<feature type="binding site" evidence="1">
    <location>
        <position position="225"/>
    </location>
    <ligand>
        <name>[4Fe-4S] cluster</name>
        <dbReference type="ChEBI" id="CHEBI:49883"/>
    </ligand>
</feature>
<sequence>MTAVLPLPHPLADPAPRDPRQRLQREQLRLGKRLQRQVGQAIADFGMISPGDKIMVCLSGGKDSYTMLDMLLQLQRKAPVPFTLVAVNLDQKQPDFPAHVLPAYLDALGVPFDIVEQDTYSVVSRVVPAGKTMCSLCSRLRRGALYAYAQTHGVTKIALGHHRDDIVATFFMNLFHHARLAAMAPKLRSDDGAHVVIRPLAYVREAHIAAYAQARQFPIIPCNLCGSQENLQRQQVGKMLQQWDHEQPGRVEQIARALGDVRPEQLADRTLFDFLALGRSGDAPPDLAPDPGAWLTASDATHDSD</sequence>
<keyword id="KW-0004">4Fe-4S</keyword>
<keyword id="KW-0067">ATP-binding</keyword>
<keyword id="KW-0963">Cytoplasm</keyword>
<keyword id="KW-0408">Iron</keyword>
<keyword id="KW-0411">Iron-sulfur</keyword>
<keyword id="KW-0460">Magnesium</keyword>
<keyword id="KW-0479">Metal-binding</keyword>
<keyword id="KW-0547">Nucleotide-binding</keyword>
<keyword id="KW-0694">RNA-binding</keyword>
<keyword id="KW-0808">Transferase</keyword>
<keyword id="KW-0819">tRNA processing</keyword>
<keyword id="KW-0820">tRNA-binding</keyword>
<organism>
    <name type="scientific">Xanthomonas oryzae pv. oryzae (strain PXO99A)</name>
    <dbReference type="NCBI Taxonomy" id="360094"/>
    <lineage>
        <taxon>Bacteria</taxon>
        <taxon>Pseudomonadati</taxon>
        <taxon>Pseudomonadota</taxon>
        <taxon>Gammaproteobacteria</taxon>
        <taxon>Lysobacterales</taxon>
        <taxon>Lysobacteraceae</taxon>
        <taxon>Xanthomonas</taxon>
    </lineage>
</organism>
<accession>B2SIG7</accession>
<gene>
    <name evidence="1" type="primary">ttcA</name>
    <name type="ordered locus">PXO_03846</name>
</gene>
<name>TTCA_XANOP</name>
<proteinExistence type="inferred from homology"/>
<protein>
    <recommendedName>
        <fullName evidence="1">tRNA-cytidine(32) 2-sulfurtransferase</fullName>
        <ecNumber evidence="1">2.8.1.-</ecNumber>
    </recommendedName>
    <alternativeName>
        <fullName evidence="1">Two-thiocytidine biosynthesis protein A</fullName>
    </alternativeName>
    <alternativeName>
        <fullName evidence="1">tRNA 2-thiocytidine biosynthesis protein TtcA</fullName>
    </alternativeName>
</protein>
<comment type="function">
    <text evidence="1">Catalyzes the ATP-dependent 2-thiolation of cytidine in position 32 of tRNA, to form 2-thiocytidine (s(2)C32). The sulfur atoms are provided by the cysteine/cysteine desulfurase (IscS) system.</text>
</comment>
<comment type="catalytic activity">
    <reaction evidence="1">
        <text>cytidine(32) in tRNA + S-sulfanyl-L-cysteinyl-[cysteine desulfurase] + AH2 + ATP = 2-thiocytidine(32) in tRNA + L-cysteinyl-[cysteine desulfurase] + A + AMP + diphosphate + H(+)</text>
        <dbReference type="Rhea" id="RHEA:57048"/>
        <dbReference type="Rhea" id="RHEA-COMP:10288"/>
        <dbReference type="Rhea" id="RHEA-COMP:12157"/>
        <dbReference type="Rhea" id="RHEA-COMP:12158"/>
        <dbReference type="Rhea" id="RHEA-COMP:14821"/>
        <dbReference type="ChEBI" id="CHEBI:13193"/>
        <dbReference type="ChEBI" id="CHEBI:15378"/>
        <dbReference type="ChEBI" id="CHEBI:17499"/>
        <dbReference type="ChEBI" id="CHEBI:29950"/>
        <dbReference type="ChEBI" id="CHEBI:30616"/>
        <dbReference type="ChEBI" id="CHEBI:33019"/>
        <dbReference type="ChEBI" id="CHEBI:61963"/>
        <dbReference type="ChEBI" id="CHEBI:82748"/>
        <dbReference type="ChEBI" id="CHEBI:141453"/>
        <dbReference type="ChEBI" id="CHEBI:456215"/>
    </reaction>
    <physiologicalReaction direction="left-to-right" evidence="1">
        <dbReference type="Rhea" id="RHEA:57049"/>
    </physiologicalReaction>
</comment>
<comment type="cofactor">
    <cofactor evidence="1">
        <name>Mg(2+)</name>
        <dbReference type="ChEBI" id="CHEBI:18420"/>
    </cofactor>
</comment>
<comment type="cofactor">
    <cofactor evidence="1">
        <name>[4Fe-4S] cluster</name>
        <dbReference type="ChEBI" id="CHEBI:49883"/>
    </cofactor>
    <text evidence="1">Binds 1 [4Fe-4S] cluster per subunit. The cluster is chelated by three Cys residues, the fourth Fe has a free coordination site that may bind a sulfur atom transferred from the persulfide of IscS.</text>
</comment>
<comment type="pathway">
    <text evidence="1">tRNA modification.</text>
</comment>
<comment type="subunit">
    <text evidence="1">Homodimer.</text>
</comment>
<comment type="subcellular location">
    <subcellularLocation>
        <location evidence="1">Cytoplasm</location>
    </subcellularLocation>
</comment>
<comment type="miscellaneous">
    <text evidence="1">The thiolation reaction likely consists of two steps: a first activation step by ATP to form an adenylated intermediate of the target base of tRNA, and a second nucleophilic substitution step of the sulfur (S) atom supplied by the hydrosulfide attached to the Fe-S cluster.</text>
</comment>
<comment type="similarity">
    <text evidence="1">Belongs to the TtcA family.</text>
</comment>
<evidence type="ECO:0000255" key="1">
    <source>
        <dbReference type="HAMAP-Rule" id="MF_01850"/>
    </source>
</evidence>
<evidence type="ECO:0000256" key="2">
    <source>
        <dbReference type="SAM" id="MobiDB-lite"/>
    </source>
</evidence>
<dbReference type="EC" id="2.8.1.-" evidence="1"/>
<dbReference type="EMBL" id="CP000967">
    <property type="protein sequence ID" value="ACD57028.1"/>
    <property type="molecule type" value="Genomic_DNA"/>
</dbReference>
<dbReference type="RefSeq" id="WP_012443789.1">
    <property type="nucleotide sequence ID" value="NC_010717.2"/>
</dbReference>
<dbReference type="SMR" id="B2SIG7"/>
<dbReference type="KEGG" id="xop:PXO_03846"/>
<dbReference type="eggNOG" id="COG0037">
    <property type="taxonomic scope" value="Bacteria"/>
</dbReference>
<dbReference type="HOGENOM" id="CLU_026481_0_1_6"/>
<dbReference type="Proteomes" id="UP000001740">
    <property type="component" value="Chromosome"/>
</dbReference>
<dbReference type="GO" id="GO:0005737">
    <property type="term" value="C:cytoplasm"/>
    <property type="evidence" value="ECO:0007669"/>
    <property type="project" value="UniProtKB-SubCell"/>
</dbReference>
<dbReference type="GO" id="GO:0051539">
    <property type="term" value="F:4 iron, 4 sulfur cluster binding"/>
    <property type="evidence" value="ECO:0007669"/>
    <property type="project" value="UniProtKB-UniRule"/>
</dbReference>
<dbReference type="GO" id="GO:0005524">
    <property type="term" value="F:ATP binding"/>
    <property type="evidence" value="ECO:0007669"/>
    <property type="project" value="UniProtKB-UniRule"/>
</dbReference>
<dbReference type="GO" id="GO:0000287">
    <property type="term" value="F:magnesium ion binding"/>
    <property type="evidence" value="ECO:0007669"/>
    <property type="project" value="UniProtKB-UniRule"/>
</dbReference>
<dbReference type="GO" id="GO:0016783">
    <property type="term" value="F:sulfurtransferase activity"/>
    <property type="evidence" value="ECO:0007669"/>
    <property type="project" value="UniProtKB-UniRule"/>
</dbReference>
<dbReference type="GO" id="GO:0000049">
    <property type="term" value="F:tRNA binding"/>
    <property type="evidence" value="ECO:0007669"/>
    <property type="project" value="UniProtKB-KW"/>
</dbReference>
<dbReference type="GO" id="GO:0034227">
    <property type="term" value="P:tRNA thio-modification"/>
    <property type="evidence" value="ECO:0007669"/>
    <property type="project" value="UniProtKB-UniRule"/>
</dbReference>
<dbReference type="CDD" id="cd24138">
    <property type="entry name" value="TtcA-like"/>
    <property type="match status" value="1"/>
</dbReference>
<dbReference type="Gene3D" id="3.40.50.620">
    <property type="entry name" value="HUPs"/>
    <property type="match status" value="1"/>
</dbReference>
<dbReference type="HAMAP" id="MF_01850">
    <property type="entry name" value="TtcA"/>
    <property type="match status" value="1"/>
</dbReference>
<dbReference type="InterPro" id="IPR014729">
    <property type="entry name" value="Rossmann-like_a/b/a_fold"/>
</dbReference>
<dbReference type="InterPro" id="IPR011063">
    <property type="entry name" value="TilS/TtcA_N"/>
</dbReference>
<dbReference type="InterPro" id="IPR012089">
    <property type="entry name" value="tRNA_Cyd_32_2_STrfase"/>
</dbReference>
<dbReference type="InterPro" id="IPR035107">
    <property type="entry name" value="tRNA_thiolation_TtcA_Ctu1"/>
</dbReference>
<dbReference type="NCBIfam" id="NF007972">
    <property type="entry name" value="PRK10696.1"/>
    <property type="match status" value="1"/>
</dbReference>
<dbReference type="PANTHER" id="PTHR43686:SF1">
    <property type="entry name" value="AMINOTRAN_5 DOMAIN-CONTAINING PROTEIN"/>
    <property type="match status" value="1"/>
</dbReference>
<dbReference type="PANTHER" id="PTHR43686">
    <property type="entry name" value="SULFURTRANSFERASE-RELATED"/>
    <property type="match status" value="1"/>
</dbReference>
<dbReference type="Pfam" id="PF01171">
    <property type="entry name" value="ATP_bind_3"/>
    <property type="match status" value="1"/>
</dbReference>
<dbReference type="PIRSF" id="PIRSF004976">
    <property type="entry name" value="ATPase_YdaO"/>
    <property type="match status" value="1"/>
</dbReference>
<dbReference type="SUPFAM" id="SSF52402">
    <property type="entry name" value="Adenine nucleotide alpha hydrolases-like"/>
    <property type="match status" value="1"/>
</dbReference>
<reference key="1">
    <citation type="journal article" date="2008" name="BMC Genomics">
        <title>Genome sequence and rapid evolution of the rice pathogen Xanthomonas oryzae pv. oryzae PXO99A.</title>
        <authorList>
            <person name="Salzberg S.L."/>
            <person name="Sommer D.D."/>
            <person name="Schatz M.C."/>
            <person name="Phillippy A.M."/>
            <person name="Rabinowicz P.D."/>
            <person name="Tsuge S."/>
            <person name="Furutani A."/>
            <person name="Ochiai H."/>
            <person name="Delcher A.L."/>
            <person name="Kelley D."/>
            <person name="Madupu R."/>
            <person name="Puiu D."/>
            <person name="Radune D."/>
            <person name="Shumway M."/>
            <person name="Trapnell C."/>
            <person name="Aparna G."/>
            <person name="Jha G."/>
            <person name="Pandey A."/>
            <person name="Patil P.B."/>
            <person name="Ishihara H."/>
            <person name="Meyer D.F."/>
            <person name="Szurek B."/>
            <person name="Verdier V."/>
            <person name="Koebnik R."/>
            <person name="Dow J.M."/>
            <person name="Ryan R.P."/>
            <person name="Hirata H."/>
            <person name="Tsuyumu S."/>
            <person name="Won Lee S."/>
            <person name="Seo Y.-S."/>
            <person name="Sriariyanum M."/>
            <person name="Ronald P.C."/>
            <person name="Sonti R.V."/>
            <person name="Van Sluys M.-A."/>
            <person name="Leach J.E."/>
            <person name="White F.F."/>
            <person name="Bogdanove A.J."/>
        </authorList>
    </citation>
    <scope>NUCLEOTIDE SEQUENCE [LARGE SCALE GENOMIC DNA]</scope>
    <source>
        <strain>PXO99A</strain>
    </source>
</reference>